<comment type="function">
    <text evidence="2">Component of the large ribosomal subunit. The ribosome is a large ribonucleoprotein complex responsible for the synthesis of proteins in the cell.</text>
</comment>
<comment type="subunit">
    <text evidence="2">Component of the large ribosomal subunit.</text>
</comment>
<comment type="subcellular location">
    <subcellularLocation>
        <location>Cytoplasm</location>
    </subcellularLocation>
</comment>
<comment type="similarity">
    <text evidence="4">Belongs to the universal ribosomal protein uL2 family.</text>
</comment>
<sequence>MGRVIRGQRKGAGSVFKAHVKHRKGAAKLRAIDFAERNGYIKGIVKDIIHDPGRGAPLAKVAFRDPYRFKKRTELFVAAEGIHTGQFVYCGKKAQLNIGNVLPVGTMPEGTIVCCVEEKPGDRGKLARASGNYATVISHNPETKKTRVKLPSGSKKVISSANRAIVGVVAGGGRIDKPILKAGRAYHKYKAKRNCWPRVRGVAMNPVEHPFGGGNHQHIGKPSTIRRDAPAGRKVGLIAARRTGRLRGTKTVQEKEN</sequence>
<gene>
    <name type="primary">rpl8</name>
</gene>
<feature type="initiator methionine" description="Removed" evidence="1">
    <location>
        <position position="1"/>
    </location>
</feature>
<feature type="chain" id="PRO_0000129747" description="Large ribosomal subunit protein uL2">
    <location>
        <begin position="2"/>
        <end position="257"/>
    </location>
</feature>
<feature type="region of interest" description="Disordered" evidence="3">
    <location>
        <begin position="207"/>
        <end position="231"/>
    </location>
</feature>
<protein>
    <recommendedName>
        <fullName evidence="4">Large ribosomal subunit protein uL2</fullName>
    </recommendedName>
    <alternativeName>
        <fullName>60S ribosomal protein L8</fullName>
    </alternativeName>
</protein>
<dbReference type="EMBL" id="U00920">
    <property type="protein sequence ID" value="AAA18911.1"/>
    <property type="molecule type" value="mRNA"/>
</dbReference>
<dbReference type="EMBL" id="BC043823">
    <property type="protein sequence ID" value="AAH43823.1"/>
    <property type="molecule type" value="mRNA"/>
</dbReference>
<dbReference type="PIR" id="S42725">
    <property type="entry name" value="S42725"/>
</dbReference>
<dbReference type="RefSeq" id="NP_001080465.1">
    <property type="nucleotide sequence ID" value="NM_001086996.1"/>
</dbReference>
<dbReference type="RefSeq" id="XP_018103547.1">
    <property type="nucleotide sequence ID" value="XM_018248058.1"/>
</dbReference>
<dbReference type="SMR" id="P41116"/>
<dbReference type="BioGRID" id="98399">
    <property type="interactions" value="2"/>
</dbReference>
<dbReference type="IntAct" id="P41116">
    <property type="interactions" value="1"/>
</dbReference>
<dbReference type="DNASU" id="380157"/>
<dbReference type="GeneID" id="380157"/>
<dbReference type="KEGG" id="xla:380157"/>
<dbReference type="AGR" id="Xenbase:XB-GENE-482213"/>
<dbReference type="CTD" id="380157"/>
<dbReference type="Xenbase" id="XB-GENE-482213">
    <property type="gene designation" value="rpl8.S"/>
</dbReference>
<dbReference type="OMA" id="GGRHPCT"/>
<dbReference type="OrthoDB" id="10267824at2759"/>
<dbReference type="CD-CODE" id="78E86D56">
    <property type="entry name" value="Mitochondrial cloud"/>
</dbReference>
<dbReference type="Proteomes" id="UP000186698">
    <property type="component" value="Chromosome 2S"/>
</dbReference>
<dbReference type="Bgee" id="380157">
    <property type="expression patterns" value="Expressed in testis and 19 other cell types or tissues"/>
</dbReference>
<dbReference type="GO" id="GO:0022625">
    <property type="term" value="C:cytosolic large ribosomal subunit"/>
    <property type="evidence" value="ECO:0000318"/>
    <property type="project" value="GO_Central"/>
</dbReference>
<dbReference type="GO" id="GO:0003723">
    <property type="term" value="F:RNA binding"/>
    <property type="evidence" value="ECO:0000318"/>
    <property type="project" value="GO_Central"/>
</dbReference>
<dbReference type="GO" id="GO:0019843">
    <property type="term" value="F:rRNA binding"/>
    <property type="evidence" value="ECO:0007669"/>
    <property type="project" value="UniProtKB-KW"/>
</dbReference>
<dbReference type="GO" id="GO:0003735">
    <property type="term" value="F:structural constituent of ribosome"/>
    <property type="evidence" value="ECO:0000318"/>
    <property type="project" value="GO_Central"/>
</dbReference>
<dbReference type="GO" id="GO:0002181">
    <property type="term" value="P:cytoplasmic translation"/>
    <property type="evidence" value="ECO:0000318"/>
    <property type="project" value="GO_Central"/>
</dbReference>
<dbReference type="FunFam" id="4.10.950.10:FF:000002">
    <property type="entry name" value="60S ribosomal protein L2"/>
    <property type="match status" value="1"/>
</dbReference>
<dbReference type="FunFam" id="2.30.30.30:FF:000006">
    <property type="entry name" value="60S ribosomal protein L8"/>
    <property type="match status" value="1"/>
</dbReference>
<dbReference type="FunFam" id="2.40.50.140:FF:000581">
    <property type="entry name" value="Ribosomal protein L8"/>
    <property type="match status" value="1"/>
</dbReference>
<dbReference type="Gene3D" id="2.30.30.30">
    <property type="match status" value="1"/>
</dbReference>
<dbReference type="Gene3D" id="2.40.50.140">
    <property type="entry name" value="Nucleic acid-binding proteins"/>
    <property type="match status" value="1"/>
</dbReference>
<dbReference type="Gene3D" id="4.10.950.10">
    <property type="entry name" value="Ribosomal protein L2, domain 3"/>
    <property type="match status" value="1"/>
</dbReference>
<dbReference type="HAMAP" id="MF_01320_A">
    <property type="entry name" value="Ribosomal_uL2_A"/>
    <property type="match status" value="1"/>
</dbReference>
<dbReference type="InterPro" id="IPR012340">
    <property type="entry name" value="NA-bd_OB-fold"/>
</dbReference>
<dbReference type="InterPro" id="IPR014722">
    <property type="entry name" value="Rib_uL2_dom2"/>
</dbReference>
<dbReference type="InterPro" id="IPR002171">
    <property type="entry name" value="Ribosomal_uL2"/>
</dbReference>
<dbReference type="InterPro" id="IPR023672">
    <property type="entry name" value="Ribosomal_uL2_arc_euk"/>
</dbReference>
<dbReference type="InterPro" id="IPR022669">
    <property type="entry name" value="Ribosomal_uL2_C"/>
</dbReference>
<dbReference type="InterPro" id="IPR022671">
    <property type="entry name" value="Ribosomal_uL2_CS"/>
</dbReference>
<dbReference type="InterPro" id="IPR014726">
    <property type="entry name" value="Ribosomal_uL2_dom3"/>
</dbReference>
<dbReference type="InterPro" id="IPR022666">
    <property type="entry name" value="Ribosomal_uL2_RNA-bd_dom"/>
</dbReference>
<dbReference type="InterPro" id="IPR008991">
    <property type="entry name" value="Translation_prot_SH3-like_sf"/>
</dbReference>
<dbReference type="NCBIfam" id="NF007180">
    <property type="entry name" value="PRK09612.1"/>
    <property type="match status" value="1"/>
</dbReference>
<dbReference type="PANTHER" id="PTHR13691:SF16">
    <property type="entry name" value="LARGE RIBOSOMAL SUBUNIT PROTEIN UL2"/>
    <property type="match status" value="1"/>
</dbReference>
<dbReference type="PANTHER" id="PTHR13691">
    <property type="entry name" value="RIBOSOMAL PROTEIN L2"/>
    <property type="match status" value="1"/>
</dbReference>
<dbReference type="Pfam" id="PF00181">
    <property type="entry name" value="Ribosomal_L2"/>
    <property type="match status" value="1"/>
</dbReference>
<dbReference type="Pfam" id="PF03947">
    <property type="entry name" value="Ribosomal_L2_C"/>
    <property type="match status" value="1"/>
</dbReference>
<dbReference type="PIRSF" id="PIRSF002158">
    <property type="entry name" value="Ribosomal_L2"/>
    <property type="match status" value="1"/>
</dbReference>
<dbReference type="SMART" id="SM01383">
    <property type="entry name" value="Ribosomal_L2"/>
    <property type="match status" value="1"/>
</dbReference>
<dbReference type="SMART" id="SM01382">
    <property type="entry name" value="Ribosomal_L2_C"/>
    <property type="match status" value="1"/>
</dbReference>
<dbReference type="SUPFAM" id="SSF50249">
    <property type="entry name" value="Nucleic acid-binding proteins"/>
    <property type="match status" value="1"/>
</dbReference>
<dbReference type="SUPFAM" id="SSF50104">
    <property type="entry name" value="Translation proteins SH3-like domain"/>
    <property type="match status" value="1"/>
</dbReference>
<dbReference type="PROSITE" id="PS00467">
    <property type="entry name" value="RIBOSOMAL_L2"/>
    <property type="match status" value="1"/>
</dbReference>
<accession>P41116</accession>
<accession>Q5D0C0</accession>
<organism>
    <name type="scientific">Xenopus laevis</name>
    <name type="common">African clawed frog</name>
    <dbReference type="NCBI Taxonomy" id="8355"/>
    <lineage>
        <taxon>Eukaryota</taxon>
        <taxon>Metazoa</taxon>
        <taxon>Chordata</taxon>
        <taxon>Craniata</taxon>
        <taxon>Vertebrata</taxon>
        <taxon>Euteleostomi</taxon>
        <taxon>Amphibia</taxon>
        <taxon>Batrachia</taxon>
        <taxon>Anura</taxon>
        <taxon>Pipoidea</taxon>
        <taxon>Pipidae</taxon>
        <taxon>Xenopodinae</taxon>
        <taxon>Xenopus</taxon>
        <taxon>Xenopus</taxon>
    </lineage>
</organism>
<reference key="1">
    <citation type="journal article" date="1994" name="Biochim. Biophys. Acta">
        <title>Cloning and characterization of the ribosomal protein L8 gene from Xenopus laevis.</title>
        <authorList>
            <person name="Shi Y."/>
            <person name="Liang V.C."/>
        </authorList>
    </citation>
    <scope>NUCLEOTIDE SEQUENCE [MRNA]</scope>
</reference>
<reference key="2">
    <citation type="submission" date="2003-01" db="EMBL/GenBank/DDBJ databases">
        <authorList>
            <consortium name="NIH - Xenopus Gene Collection (XGC) project"/>
        </authorList>
    </citation>
    <scope>NUCLEOTIDE SEQUENCE [LARGE SCALE MRNA]</scope>
    <source>
        <tissue>Embryo</tissue>
    </source>
</reference>
<name>RL8_XENLA</name>
<evidence type="ECO:0000250" key="1"/>
<evidence type="ECO:0000250" key="2">
    <source>
        <dbReference type="UniProtKB" id="P62917"/>
    </source>
</evidence>
<evidence type="ECO:0000256" key="3">
    <source>
        <dbReference type="SAM" id="MobiDB-lite"/>
    </source>
</evidence>
<evidence type="ECO:0000305" key="4"/>
<keyword id="KW-0963">Cytoplasm</keyword>
<keyword id="KW-1185">Reference proteome</keyword>
<keyword id="KW-0687">Ribonucleoprotein</keyword>
<keyword id="KW-0689">Ribosomal protein</keyword>
<keyword id="KW-0694">RNA-binding</keyword>
<keyword id="KW-0699">rRNA-binding</keyword>
<proteinExistence type="evidence at transcript level"/>